<evidence type="ECO:0000255" key="1">
    <source>
        <dbReference type="HAMAP-Rule" id="MF_00102"/>
    </source>
</evidence>
<evidence type="ECO:0000305" key="2"/>
<proteinExistence type="inferred from homology"/>
<dbReference type="EC" id="1.17.1.8" evidence="1"/>
<dbReference type="EMBL" id="CP001280">
    <property type="protein sequence ID" value="ACK51870.1"/>
    <property type="molecule type" value="Genomic_DNA"/>
</dbReference>
<dbReference type="RefSeq" id="WP_012591939.1">
    <property type="nucleotide sequence ID" value="NC_011666.1"/>
</dbReference>
<dbReference type="SMR" id="B8EIQ3"/>
<dbReference type="STRING" id="395965.Msil_2959"/>
<dbReference type="KEGG" id="msl:Msil_2959"/>
<dbReference type="eggNOG" id="COG0289">
    <property type="taxonomic scope" value="Bacteria"/>
</dbReference>
<dbReference type="HOGENOM" id="CLU_047479_2_1_5"/>
<dbReference type="OrthoDB" id="9790352at2"/>
<dbReference type="UniPathway" id="UPA00034">
    <property type="reaction ID" value="UER00018"/>
</dbReference>
<dbReference type="Proteomes" id="UP000002257">
    <property type="component" value="Chromosome"/>
</dbReference>
<dbReference type="GO" id="GO:0005829">
    <property type="term" value="C:cytosol"/>
    <property type="evidence" value="ECO:0007669"/>
    <property type="project" value="TreeGrafter"/>
</dbReference>
<dbReference type="GO" id="GO:0008839">
    <property type="term" value="F:4-hydroxy-tetrahydrodipicolinate reductase"/>
    <property type="evidence" value="ECO:0007669"/>
    <property type="project" value="UniProtKB-EC"/>
</dbReference>
<dbReference type="GO" id="GO:0051287">
    <property type="term" value="F:NAD binding"/>
    <property type="evidence" value="ECO:0007669"/>
    <property type="project" value="UniProtKB-UniRule"/>
</dbReference>
<dbReference type="GO" id="GO:0050661">
    <property type="term" value="F:NADP binding"/>
    <property type="evidence" value="ECO:0007669"/>
    <property type="project" value="UniProtKB-UniRule"/>
</dbReference>
<dbReference type="GO" id="GO:0016726">
    <property type="term" value="F:oxidoreductase activity, acting on CH or CH2 groups, NAD or NADP as acceptor"/>
    <property type="evidence" value="ECO:0007669"/>
    <property type="project" value="UniProtKB-UniRule"/>
</dbReference>
<dbReference type="GO" id="GO:0019877">
    <property type="term" value="P:diaminopimelate biosynthetic process"/>
    <property type="evidence" value="ECO:0007669"/>
    <property type="project" value="UniProtKB-UniRule"/>
</dbReference>
<dbReference type="GO" id="GO:0009089">
    <property type="term" value="P:lysine biosynthetic process via diaminopimelate"/>
    <property type="evidence" value="ECO:0007669"/>
    <property type="project" value="UniProtKB-UniRule"/>
</dbReference>
<dbReference type="CDD" id="cd02274">
    <property type="entry name" value="DHDPR_N"/>
    <property type="match status" value="1"/>
</dbReference>
<dbReference type="FunFam" id="3.30.360.10:FF:000004">
    <property type="entry name" value="4-hydroxy-tetrahydrodipicolinate reductase"/>
    <property type="match status" value="1"/>
</dbReference>
<dbReference type="Gene3D" id="3.30.360.10">
    <property type="entry name" value="Dihydrodipicolinate Reductase, domain 2"/>
    <property type="match status" value="1"/>
</dbReference>
<dbReference type="Gene3D" id="3.40.50.720">
    <property type="entry name" value="NAD(P)-binding Rossmann-like Domain"/>
    <property type="match status" value="1"/>
</dbReference>
<dbReference type="HAMAP" id="MF_00102">
    <property type="entry name" value="DapB"/>
    <property type="match status" value="1"/>
</dbReference>
<dbReference type="InterPro" id="IPR022663">
    <property type="entry name" value="DapB_C"/>
</dbReference>
<dbReference type="InterPro" id="IPR000846">
    <property type="entry name" value="DapB_N"/>
</dbReference>
<dbReference type="InterPro" id="IPR022664">
    <property type="entry name" value="DapB_N_CS"/>
</dbReference>
<dbReference type="InterPro" id="IPR023940">
    <property type="entry name" value="DHDPR_bac"/>
</dbReference>
<dbReference type="InterPro" id="IPR036291">
    <property type="entry name" value="NAD(P)-bd_dom_sf"/>
</dbReference>
<dbReference type="NCBIfam" id="TIGR00036">
    <property type="entry name" value="dapB"/>
    <property type="match status" value="1"/>
</dbReference>
<dbReference type="PANTHER" id="PTHR20836:SF0">
    <property type="entry name" value="4-HYDROXY-TETRAHYDRODIPICOLINATE REDUCTASE 1, CHLOROPLASTIC-RELATED"/>
    <property type="match status" value="1"/>
</dbReference>
<dbReference type="PANTHER" id="PTHR20836">
    <property type="entry name" value="DIHYDRODIPICOLINATE REDUCTASE"/>
    <property type="match status" value="1"/>
</dbReference>
<dbReference type="Pfam" id="PF05173">
    <property type="entry name" value="DapB_C"/>
    <property type="match status" value="1"/>
</dbReference>
<dbReference type="Pfam" id="PF01113">
    <property type="entry name" value="DapB_N"/>
    <property type="match status" value="1"/>
</dbReference>
<dbReference type="PIRSF" id="PIRSF000161">
    <property type="entry name" value="DHPR"/>
    <property type="match status" value="1"/>
</dbReference>
<dbReference type="SUPFAM" id="SSF55347">
    <property type="entry name" value="Glyceraldehyde-3-phosphate dehydrogenase-like, C-terminal domain"/>
    <property type="match status" value="1"/>
</dbReference>
<dbReference type="SUPFAM" id="SSF51735">
    <property type="entry name" value="NAD(P)-binding Rossmann-fold domains"/>
    <property type="match status" value="1"/>
</dbReference>
<dbReference type="PROSITE" id="PS01298">
    <property type="entry name" value="DAPB"/>
    <property type="match status" value="1"/>
</dbReference>
<accession>B8EIQ3</accession>
<name>DAPB_METSB</name>
<feature type="chain" id="PRO_1000118860" description="4-hydroxy-tetrahydrodipicolinate reductase">
    <location>
        <begin position="1"/>
        <end position="272"/>
    </location>
</feature>
<feature type="active site" description="Proton donor/acceptor" evidence="1">
    <location>
        <position position="157"/>
    </location>
</feature>
<feature type="active site" description="Proton donor" evidence="1">
    <location>
        <position position="161"/>
    </location>
</feature>
<feature type="binding site" evidence="1">
    <location>
        <begin position="10"/>
        <end position="15"/>
    </location>
    <ligand>
        <name>NAD(+)</name>
        <dbReference type="ChEBI" id="CHEBI:57540"/>
    </ligand>
</feature>
<feature type="binding site" evidence="1">
    <location>
        <position position="37"/>
    </location>
    <ligand>
        <name>NADP(+)</name>
        <dbReference type="ChEBI" id="CHEBI:58349"/>
    </ligand>
</feature>
<feature type="binding site" evidence="1">
    <location>
        <begin position="100"/>
        <end position="102"/>
    </location>
    <ligand>
        <name>NAD(+)</name>
        <dbReference type="ChEBI" id="CHEBI:57540"/>
    </ligand>
</feature>
<feature type="binding site" evidence="1">
    <location>
        <begin position="124"/>
        <end position="127"/>
    </location>
    <ligand>
        <name>NAD(+)</name>
        <dbReference type="ChEBI" id="CHEBI:57540"/>
    </ligand>
</feature>
<feature type="binding site" evidence="1">
    <location>
        <position position="158"/>
    </location>
    <ligand>
        <name>(S)-2,3,4,5-tetrahydrodipicolinate</name>
        <dbReference type="ChEBI" id="CHEBI:16845"/>
    </ligand>
</feature>
<feature type="binding site" evidence="1">
    <location>
        <begin position="167"/>
        <end position="168"/>
    </location>
    <ligand>
        <name>(S)-2,3,4,5-tetrahydrodipicolinate</name>
        <dbReference type="ChEBI" id="CHEBI:16845"/>
    </ligand>
</feature>
<organism>
    <name type="scientific">Methylocella silvestris (strain DSM 15510 / CIP 108128 / LMG 27833 / NCIMB 13906 / BL2)</name>
    <dbReference type="NCBI Taxonomy" id="395965"/>
    <lineage>
        <taxon>Bacteria</taxon>
        <taxon>Pseudomonadati</taxon>
        <taxon>Pseudomonadota</taxon>
        <taxon>Alphaproteobacteria</taxon>
        <taxon>Hyphomicrobiales</taxon>
        <taxon>Beijerinckiaceae</taxon>
        <taxon>Methylocella</taxon>
    </lineage>
</organism>
<reference key="1">
    <citation type="journal article" date="2010" name="J. Bacteriol.">
        <title>Complete genome sequence of the aerobic facultative methanotroph Methylocella silvestris BL2.</title>
        <authorList>
            <person name="Chen Y."/>
            <person name="Crombie A."/>
            <person name="Rahman M.T."/>
            <person name="Dedysh S.N."/>
            <person name="Liesack W."/>
            <person name="Stott M.B."/>
            <person name="Alam M."/>
            <person name="Theisen A.R."/>
            <person name="Murrell J.C."/>
            <person name="Dunfield P.F."/>
        </authorList>
    </citation>
    <scope>NUCLEOTIDE SEQUENCE [LARGE SCALE GENOMIC DNA]</scope>
    <source>
        <strain>DSM 15510 / CIP 108128 / LMG 27833 / NCIMB 13906 / BL2</strain>
    </source>
</reference>
<keyword id="KW-0028">Amino-acid biosynthesis</keyword>
<keyword id="KW-0963">Cytoplasm</keyword>
<keyword id="KW-0220">Diaminopimelate biosynthesis</keyword>
<keyword id="KW-0457">Lysine biosynthesis</keyword>
<keyword id="KW-0520">NAD</keyword>
<keyword id="KW-0521">NADP</keyword>
<keyword id="KW-0560">Oxidoreductase</keyword>
<keyword id="KW-1185">Reference proteome</keyword>
<comment type="function">
    <text evidence="1">Catalyzes the conversion of 4-hydroxy-tetrahydrodipicolinate (HTPA) to tetrahydrodipicolinate.</text>
</comment>
<comment type="catalytic activity">
    <reaction evidence="1">
        <text>(S)-2,3,4,5-tetrahydrodipicolinate + NAD(+) + H2O = (2S,4S)-4-hydroxy-2,3,4,5-tetrahydrodipicolinate + NADH + H(+)</text>
        <dbReference type="Rhea" id="RHEA:35323"/>
        <dbReference type="ChEBI" id="CHEBI:15377"/>
        <dbReference type="ChEBI" id="CHEBI:15378"/>
        <dbReference type="ChEBI" id="CHEBI:16845"/>
        <dbReference type="ChEBI" id="CHEBI:57540"/>
        <dbReference type="ChEBI" id="CHEBI:57945"/>
        <dbReference type="ChEBI" id="CHEBI:67139"/>
        <dbReference type="EC" id="1.17.1.8"/>
    </reaction>
</comment>
<comment type="catalytic activity">
    <reaction evidence="1">
        <text>(S)-2,3,4,5-tetrahydrodipicolinate + NADP(+) + H2O = (2S,4S)-4-hydroxy-2,3,4,5-tetrahydrodipicolinate + NADPH + H(+)</text>
        <dbReference type="Rhea" id="RHEA:35331"/>
        <dbReference type="ChEBI" id="CHEBI:15377"/>
        <dbReference type="ChEBI" id="CHEBI:15378"/>
        <dbReference type="ChEBI" id="CHEBI:16845"/>
        <dbReference type="ChEBI" id="CHEBI:57783"/>
        <dbReference type="ChEBI" id="CHEBI:58349"/>
        <dbReference type="ChEBI" id="CHEBI:67139"/>
        <dbReference type="EC" id="1.17.1.8"/>
    </reaction>
</comment>
<comment type="pathway">
    <text evidence="1">Amino-acid biosynthesis; L-lysine biosynthesis via DAP pathway; (S)-tetrahydrodipicolinate from L-aspartate: step 4/4.</text>
</comment>
<comment type="subcellular location">
    <subcellularLocation>
        <location evidence="1">Cytoplasm</location>
    </subcellularLocation>
</comment>
<comment type="similarity">
    <text evidence="1">Belongs to the DapB family.</text>
</comment>
<comment type="caution">
    <text evidence="2">Was originally thought to be a dihydrodipicolinate reductase (DHDPR), catalyzing the conversion of dihydrodipicolinate to tetrahydrodipicolinate. However, it was shown in E.coli that the substrate of the enzymatic reaction is not dihydrodipicolinate (DHDP) but in fact (2S,4S)-4-hydroxy-2,3,4,5-tetrahydrodipicolinic acid (HTPA), the product released by the DapA-catalyzed reaction.</text>
</comment>
<sequence>MGDMRLVVAGAAGRMGRVLVQIVQQTPGAMVSGALARADSPAIGQDAGVLAGCGEIGVKISTDPLRAVADCDGVLDFTSPASTMVLATLAAQARVVHVIGTTGLSPEHLARLDAAARHAVIVQSGNMSLGVNLLAALVEKAARTLGPEFDIEIAEMHHRAKVDAPSGTALLLGEAAAKGRNIDLPSHSLRARDGHTGARPEGAIGFASLRGGGVVGEHKVYFAGAGERLELAHVAEDRSIFARGAVKAALWGRGRKSGLYSMADVLGLGDKI</sequence>
<protein>
    <recommendedName>
        <fullName evidence="1">4-hydroxy-tetrahydrodipicolinate reductase</fullName>
        <shortName evidence="1">HTPA reductase</shortName>
        <ecNumber evidence="1">1.17.1.8</ecNumber>
    </recommendedName>
</protein>
<gene>
    <name evidence="1" type="primary">dapB</name>
    <name type="ordered locus">Msil_2959</name>
</gene>